<protein>
    <recommendedName>
        <fullName evidence="1">Phosphoglucosamine mutase</fullName>
        <ecNumber evidence="1">5.4.2.10</ecNumber>
    </recommendedName>
</protein>
<feature type="chain" id="PRO_0000147841" description="Phosphoglucosamine mutase">
    <location>
        <begin position="1"/>
        <end position="448"/>
    </location>
</feature>
<feature type="active site" description="Phosphoserine intermediate" evidence="1">
    <location>
        <position position="100"/>
    </location>
</feature>
<feature type="binding site" description="via phosphate group" evidence="1">
    <location>
        <position position="100"/>
    </location>
    <ligand>
        <name>Mg(2+)</name>
        <dbReference type="ChEBI" id="CHEBI:18420"/>
    </ligand>
</feature>
<feature type="binding site" evidence="1">
    <location>
        <position position="240"/>
    </location>
    <ligand>
        <name>Mg(2+)</name>
        <dbReference type="ChEBI" id="CHEBI:18420"/>
    </ligand>
</feature>
<feature type="binding site" evidence="1">
    <location>
        <position position="242"/>
    </location>
    <ligand>
        <name>Mg(2+)</name>
        <dbReference type="ChEBI" id="CHEBI:18420"/>
    </ligand>
</feature>
<feature type="binding site" evidence="1">
    <location>
        <position position="244"/>
    </location>
    <ligand>
        <name>Mg(2+)</name>
        <dbReference type="ChEBI" id="CHEBI:18420"/>
    </ligand>
</feature>
<feature type="modified residue" description="Phosphoserine" evidence="1">
    <location>
        <position position="100"/>
    </location>
</feature>
<reference key="1">
    <citation type="journal article" date="2003" name="Nature">
        <title>Genome sequence of Bacillus cereus and comparative analysis with Bacillus anthracis.</title>
        <authorList>
            <person name="Ivanova N."/>
            <person name="Sorokin A."/>
            <person name="Anderson I."/>
            <person name="Galleron N."/>
            <person name="Candelon B."/>
            <person name="Kapatral V."/>
            <person name="Bhattacharyya A."/>
            <person name="Reznik G."/>
            <person name="Mikhailova N."/>
            <person name="Lapidus A."/>
            <person name="Chu L."/>
            <person name="Mazur M."/>
            <person name="Goltsman E."/>
            <person name="Larsen N."/>
            <person name="D'Souza M."/>
            <person name="Walunas T."/>
            <person name="Grechkin Y."/>
            <person name="Pusch G."/>
            <person name="Haselkorn R."/>
            <person name="Fonstein M."/>
            <person name="Ehrlich S.D."/>
            <person name="Overbeek R."/>
            <person name="Kyrpides N.C."/>
        </authorList>
    </citation>
    <scope>NUCLEOTIDE SEQUENCE [LARGE SCALE GENOMIC DNA]</scope>
    <source>
        <strain>ATCC 14579 / DSM 31 / CCUG 7414 / JCM 2152 / NBRC 15305 / NCIMB 9373 / NCTC 2599 / NRRL B-3711</strain>
    </source>
</reference>
<sequence>MGKYFGTDGVRGVANKELTPELAFKIGRFGGYVLTKDTDRPKVIIGRDTRVSGHMLEGALVAGLLSTGAEVMRLGVISTPGVAYLTKALDAQAGVMISASHNPVQDNGIKFFGSDGFKLTDEQEAEIEALLDKEVDELPRPTGTNLGQVSDYFEGGQKYLQYIKQTVEEDFSGLHIALDCAHGATSSLAPYLFADLEADISTMGTSPNGMNINEGVGSTHPEGLAELVKEKGADIGLAFDGDGDRLIAVDEKGNIVDGDQIMFICAKYMKETGQLKHNTVVSTVMSNLGFYKALEANNITSDKTAVGDRYVMEEMKRGGYNLGGEQSGHIILLDYITTGDGMLSALQLVNIMKMTKKPLSELAGEMTKFPQLLVNVRVTDKKLALENEKIKEIIRVVEEEMNGDGRILVRPSGTEPLIRVMAEAPTQEVCDAYVHRIVEVVKAEVGAE</sequence>
<dbReference type="EC" id="5.4.2.10" evidence="1"/>
<dbReference type="EMBL" id="AE016877">
    <property type="protein sequence ID" value="AAP07257.1"/>
    <property type="molecule type" value="Genomic_DNA"/>
</dbReference>
<dbReference type="RefSeq" id="NP_830056.1">
    <property type="nucleotide sequence ID" value="NC_004722.1"/>
</dbReference>
<dbReference type="RefSeq" id="WP_000521476.1">
    <property type="nucleotide sequence ID" value="NZ_CP138336.1"/>
</dbReference>
<dbReference type="SMR" id="Q81J03"/>
<dbReference type="STRING" id="226900.BC_0188"/>
<dbReference type="GeneID" id="72446986"/>
<dbReference type="KEGG" id="bce:BC0188"/>
<dbReference type="PATRIC" id="fig|226900.8.peg.179"/>
<dbReference type="HOGENOM" id="CLU_016950_7_0_9"/>
<dbReference type="OrthoDB" id="9806956at2"/>
<dbReference type="Proteomes" id="UP000001417">
    <property type="component" value="Chromosome"/>
</dbReference>
<dbReference type="GO" id="GO:0005829">
    <property type="term" value="C:cytosol"/>
    <property type="evidence" value="ECO:0000318"/>
    <property type="project" value="GO_Central"/>
</dbReference>
<dbReference type="GO" id="GO:0000287">
    <property type="term" value="F:magnesium ion binding"/>
    <property type="evidence" value="ECO:0007669"/>
    <property type="project" value="UniProtKB-UniRule"/>
</dbReference>
<dbReference type="GO" id="GO:0008966">
    <property type="term" value="F:phosphoglucosamine mutase activity"/>
    <property type="evidence" value="ECO:0000318"/>
    <property type="project" value="GO_Central"/>
</dbReference>
<dbReference type="GO" id="GO:0004615">
    <property type="term" value="F:phosphomannomutase activity"/>
    <property type="evidence" value="ECO:0000318"/>
    <property type="project" value="GO_Central"/>
</dbReference>
<dbReference type="GO" id="GO:0005975">
    <property type="term" value="P:carbohydrate metabolic process"/>
    <property type="evidence" value="ECO:0007669"/>
    <property type="project" value="InterPro"/>
</dbReference>
<dbReference type="GO" id="GO:0009252">
    <property type="term" value="P:peptidoglycan biosynthetic process"/>
    <property type="evidence" value="ECO:0000318"/>
    <property type="project" value="GO_Central"/>
</dbReference>
<dbReference type="GO" id="GO:0006048">
    <property type="term" value="P:UDP-N-acetylglucosamine biosynthetic process"/>
    <property type="evidence" value="ECO:0000318"/>
    <property type="project" value="GO_Central"/>
</dbReference>
<dbReference type="CDD" id="cd05802">
    <property type="entry name" value="GlmM"/>
    <property type="match status" value="1"/>
</dbReference>
<dbReference type="FunFam" id="3.30.310.50:FF:000001">
    <property type="entry name" value="Phosphoglucosamine mutase"/>
    <property type="match status" value="1"/>
</dbReference>
<dbReference type="FunFam" id="3.40.120.10:FF:000001">
    <property type="entry name" value="Phosphoglucosamine mutase"/>
    <property type="match status" value="1"/>
</dbReference>
<dbReference type="FunFam" id="3.40.120.10:FF:000002">
    <property type="entry name" value="Phosphoglucosamine mutase"/>
    <property type="match status" value="1"/>
</dbReference>
<dbReference type="Gene3D" id="3.40.120.10">
    <property type="entry name" value="Alpha-D-Glucose-1,6-Bisphosphate, subunit A, domain 3"/>
    <property type="match status" value="3"/>
</dbReference>
<dbReference type="Gene3D" id="3.30.310.50">
    <property type="entry name" value="Alpha-D-phosphohexomutase, C-terminal domain"/>
    <property type="match status" value="1"/>
</dbReference>
<dbReference type="HAMAP" id="MF_01554_B">
    <property type="entry name" value="GlmM_B"/>
    <property type="match status" value="1"/>
</dbReference>
<dbReference type="InterPro" id="IPR005844">
    <property type="entry name" value="A-D-PHexomutase_a/b/a-I"/>
</dbReference>
<dbReference type="InterPro" id="IPR016055">
    <property type="entry name" value="A-D-PHexomutase_a/b/a-I/II/III"/>
</dbReference>
<dbReference type="InterPro" id="IPR005845">
    <property type="entry name" value="A-D-PHexomutase_a/b/a-II"/>
</dbReference>
<dbReference type="InterPro" id="IPR005846">
    <property type="entry name" value="A-D-PHexomutase_a/b/a-III"/>
</dbReference>
<dbReference type="InterPro" id="IPR005843">
    <property type="entry name" value="A-D-PHexomutase_C"/>
</dbReference>
<dbReference type="InterPro" id="IPR036900">
    <property type="entry name" value="A-D-PHexomutase_C_sf"/>
</dbReference>
<dbReference type="InterPro" id="IPR016066">
    <property type="entry name" value="A-D-PHexomutase_CS"/>
</dbReference>
<dbReference type="InterPro" id="IPR005841">
    <property type="entry name" value="Alpha-D-phosphohexomutase_SF"/>
</dbReference>
<dbReference type="InterPro" id="IPR006352">
    <property type="entry name" value="GlmM_bact"/>
</dbReference>
<dbReference type="InterPro" id="IPR050060">
    <property type="entry name" value="Phosphoglucosamine_mutase"/>
</dbReference>
<dbReference type="NCBIfam" id="TIGR01455">
    <property type="entry name" value="glmM"/>
    <property type="match status" value="1"/>
</dbReference>
<dbReference type="NCBIfam" id="NF008139">
    <property type="entry name" value="PRK10887.1"/>
    <property type="match status" value="1"/>
</dbReference>
<dbReference type="PANTHER" id="PTHR42946:SF1">
    <property type="entry name" value="PHOSPHOGLUCOMUTASE (ALPHA-D-GLUCOSE-1,6-BISPHOSPHATE-DEPENDENT)"/>
    <property type="match status" value="1"/>
</dbReference>
<dbReference type="PANTHER" id="PTHR42946">
    <property type="entry name" value="PHOSPHOHEXOSE MUTASE"/>
    <property type="match status" value="1"/>
</dbReference>
<dbReference type="Pfam" id="PF02878">
    <property type="entry name" value="PGM_PMM_I"/>
    <property type="match status" value="1"/>
</dbReference>
<dbReference type="Pfam" id="PF02879">
    <property type="entry name" value="PGM_PMM_II"/>
    <property type="match status" value="1"/>
</dbReference>
<dbReference type="Pfam" id="PF02880">
    <property type="entry name" value="PGM_PMM_III"/>
    <property type="match status" value="1"/>
</dbReference>
<dbReference type="Pfam" id="PF00408">
    <property type="entry name" value="PGM_PMM_IV"/>
    <property type="match status" value="1"/>
</dbReference>
<dbReference type="PRINTS" id="PR00509">
    <property type="entry name" value="PGMPMM"/>
</dbReference>
<dbReference type="SUPFAM" id="SSF55957">
    <property type="entry name" value="Phosphoglucomutase, C-terminal domain"/>
    <property type="match status" value="1"/>
</dbReference>
<dbReference type="SUPFAM" id="SSF53738">
    <property type="entry name" value="Phosphoglucomutase, first 3 domains"/>
    <property type="match status" value="3"/>
</dbReference>
<dbReference type="PROSITE" id="PS00710">
    <property type="entry name" value="PGM_PMM"/>
    <property type="match status" value="1"/>
</dbReference>
<gene>
    <name evidence="1" type="primary">glmM</name>
    <name type="ordered locus">BC_0188</name>
</gene>
<organism>
    <name type="scientific">Bacillus cereus (strain ATCC 14579 / DSM 31 / CCUG 7414 / JCM 2152 / NBRC 15305 / NCIMB 9373 / NCTC 2599 / NRRL B-3711)</name>
    <dbReference type="NCBI Taxonomy" id="226900"/>
    <lineage>
        <taxon>Bacteria</taxon>
        <taxon>Bacillati</taxon>
        <taxon>Bacillota</taxon>
        <taxon>Bacilli</taxon>
        <taxon>Bacillales</taxon>
        <taxon>Bacillaceae</taxon>
        <taxon>Bacillus</taxon>
        <taxon>Bacillus cereus group</taxon>
    </lineage>
</organism>
<name>GLMM_BACCR</name>
<evidence type="ECO:0000255" key="1">
    <source>
        <dbReference type="HAMAP-Rule" id="MF_01554"/>
    </source>
</evidence>
<comment type="function">
    <text evidence="1">Catalyzes the conversion of glucosamine-6-phosphate to glucosamine-1-phosphate.</text>
</comment>
<comment type="catalytic activity">
    <reaction evidence="1">
        <text>alpha-D-glucosamine 1-phosphate = D-glucosamine 6-phosphate</text>
        <dbReference type="Rhea" id="RHEA:23424"/>
        <dbReference type="ChEBI" id="CHEBI:58516"/>
        <dbReference type="ChEBI" id="CHEBI:58725"/>
        <dbReference type="EC" id="5.4.2.10"/>
    </reaction>
</comment>
<comment type="cofactor">
    <cofactor evidence="1">
        <name>Mg(2+)</name>
        <dbReference type="ChEBI" id="CHEBI:18420"/>
    </cofactor>
    <text evidence="1">Binds 1 Mg(2+) ion per subunit.</text>
</comment>
<comment type="PTM">
    <text evidence="1">Activated by phosphorylation.</text>
</comment>
<comment type="similarity">
    <text evidence="1">Belongs to the phosphohexose mutase family.</text>
</comment>
<proteinExistence type="inferred from homology"/>
<keyword id="KW-0413">Isomerase</keyword>
<keyword id="KW-0460">Magnesium</keyword>
<keyword id="KW-0479">Metal-binding</keyword>
<keyword id="KW-0597">Phosphoprotein</keyword>
<keyword id="KW-1185">Reference proteome</keyword>
<accession>Q81J03</accession>